<name>UPP_SYNY3</name>
<sequence>MASQLRVYVPEHPLIKHWLGVARDENTPPVLFKTAMGELGRWLTYEAARYWLPTVDTEVKTPLAIAKASLIDPQTPFVIVPILRAGLALVEGAQGLLPLAKIYHLGLVRNETTLEPSLYLNKLPERFAPGTHLLLLDPMLATGNTIMAALDLLMARDIDANLIRLVSVVAAPTALQKLSNAHPNLTIYTAMIDEQLNDRGYIVPGLGDAGDRCFGT</sequence>
<organism>
    <name type="scientific">Synechocystis sp. (strain ATCC 27184 / PCC 6803 / Kazusa)</name>
    <dbReference type="NCBI Taxonomy" id="1111708"/>
    <lineage>
        <taxon>Bacteria</taxon>
        <taxon>Bacillati</taxon>
        <taxon>Cyanobacteriota</taxon>
        <taxon>Cyanophyceae</taxon>
        <taxon>Synechococcales</taxon>
        <taxon>Merismopediaceae</taxon>
        <taxon>Synechocystis</taxon>
    </lineage>
</organism>
<dbReference type="EC" id="2.4.2.9" evidence="1"/>
<dbReference type="EMBL" id="BA000022">
    <property type="protein sequence ID" value="BAA16768.1"/>
    <property type="molecule type" value="Genomic_DNA"/>
</dbReference>
<dbReference type="PIR" id="S74616">
    <property type="entry name" value="S74616"/>
</dbReference>
<dbReference type="SMR" id="P72753"/>
<dbReference type="FunCoup" id="P72753">
    <property type="interactions" value="411"/>
</dbReference>
<dbReference type="IntAct" id="P72753">
    <property type="interactions" value="1"/>
</dbReference>
<dbReference type="STRING" id="1148.gene:10497624"/>
<dbReference type="PaxDb" id="1148-1651841"/>
<dbReference type="EnsemblBacteria" id="BAA16768">
    <property type="protein sequence ID" value="BAA16768"/>
    <property type="gene ID" value="BAA16768"/>
</dbReference>
<dbReference type="KEGG" id="syn:sll1035"/>
<dbReference type="eggNOG" id="COG0035">
    <property type="taxonomic scope" value="Bacteria"/>
</dbReference>
<dbReference type="InParanoid" id="P72753"/>
<dbReference type="PhylomeDB" id="P72753"/>
<dbReference type="UniPathway" id="UPA00574">
    <property type="reaction ID" value="UER00636"/>
</dbReference>
<dbReference type="Proteomes" id="UP000001425">
    <property type="component" value="Chromosome"/>
</dbReference>
<dbReference type="GO" id="GO:0005737">
    <property type="term" value="C:cytoplasm"/>
    <property type="evidence" value="ECO:0000318"/>
    <property type="project" value="GO_Central"/>
</dbReference>
<dbReference type="GO" id="GO:0005525">
    <property type="term" value="F:GTP binding"/>
    <property type="evidence" value="ECO:0007669"/>
    <property type="project" value="UniProtKB-KW"/>
</dbReference>
<dbReference type="GO" id="GO:0000287">
    <property type="term" value="F:magnesium ion binding"/>
    <property type="evidence" value="ECO:0007669"/>
    <property type="project" value="UniProtKB-UniRule"/>
</dbReference>
<dbReference type="GO" id="GO:0004845">
    <property type="term" value="F:uracil phosphoribosyltransferase activity"/>
    <property type="evidence" value="ECO:0000318"/>
    <property type="project" value="GO_Central"/>
</dbReference>
<dbReference type="GO" id="GO:0044206">
    <property type="term" value="P:UMP salvage"/>
    <property type="evidence" value="ECO:0007669"/>
    <property type="project" value="UniProtKB-UniRule"/>
</dbReference>
<dbReference type="GO" id="GO:0006223">
    <property type="term" value="P:uracil salvage"/>
    <property type="evidence" value="ECO:0007669"/>
    <property type="project" value="InterPro"/>
</dbReference>
<dbReference type="CDD" id="cd06223">
    <property type="entry name" value="PRTases_typeI"/>
    <property type="match status" value="1"/>
</dbReference>
<dbReference type="FunFam" id="3.40.50.2020:FF:000003">
    <property type="entry name" value="Uracil phosphoribosyltransferase"/>
    <property type="match status" value="1"/>
</dbReference>
<dbReference type="Gene3D" id="3.40.50.2020">
    <property type="match status" value="1"/>
</dbReference>
<dbReference type="HAMAP" id="MF_01218_B">
    <property type="entry name" value="Upp_B"/>
    <property type="match status" value="1"/>
</dbReference>
<dbReference type="InterPro" id="IPR000836">
    <property type="entry name" value="PRibTrfase_dom"/>
</dbReference>
<dbReference type="InterPro" id="IPR029057">
    <property type="entry name" value="PRTase-like"/>
</dbReference>
<dbReference type="InterPro" id="IPR034332">
    <property type="entry name" value="Upp_B"/>
</dbReference>
<dbReference type="InterPro" id="IPR050054">
    <property type="entry name" value="UPRTase/APRTase"/>
</dbReference>
<dbReference type="InterPro" id="IPR005765">
    <property type="entry name" value="Ura_phspho_trans"/>
</dbReference>
<dbReference type="NCBIfam" id="NF001097">
    <property type="entry name" value="PRK00129.1"/>
    <property type="match status" value="1"/>
</dbReference>
<dbReference type="NCBIfam" id="TIGR01091">
    <property type="entry name" value="upp"/>
    <property type="match status" value="1"/>
</dbReference>
<dbReference type="PANTHER" id="PTHR32315">
    <property type="entry name" value="ADENINE PHOSPHORIBOSYLTRANSFERASE"/>
    <property type="match status" value="1"/>
</dbReference>
<dbReference type="PANTHER" id="PTHR32315:SF4">
    <property type="entry name" value="URACIL PHOSPHORIBOSYLTRANSFERASE, CHLOROPLASTIC"/>
    <property type="match status" value="1"/>
</dbReference>
<dbReference type="Pfam" id="PF14681">
    <property type="entry name" value="UPRTase"/>
    <property type="match status" value="1"/>
</dbReference>
<dbReference type="SUPFAM" id="SSF53271">
    <property type="entry name" value="PRTase-like"/>
    <property type="match status" value="1"/>
</dbReference>
<reference key="1">
    <citation type="journal article" date="1996" name="DNA Res.">
        <title>Sequence analysis of the genome of the unicellular cyanobacterium Synechocystis sp. strain PCC6803. II. Sequence determination of the entire genome and assignment of potential protein-coding regions.</title>
        <authorList>
            <person name="Kaneko T."/>
            <person name="Sato S."/>
            <person name="Kotani H."/>
            <person name="Tanaka A."/>
            <person name="Asamizu E."/>
            <person name="Nakamura Y."/>
            <person name="Miyajima N."/>
            <person name="Hirosawa M."/>
            <person name="Sugiura M."/>
            <person name="Sasamoto S."/>
            <person name="Kimura T."/>
            <person name="Hosouchi T."/>
            <person name="Matsuno A."/>
            <person name="Muraki A."/>
            <person name="Nakazaki N."/>
            <person name="Naruo K."/>
            <person name="Okumura S."/>
            <person name="Shimpo S."/>
            <person name="Takeuchi C."/>
            <person name="Wada T."/>
            <person name="Watanabe A."/>
            <person name="Yamada M."/>
            <person name="Yasuda M."/>
            <person name="Tabata S."/>
        </authorList>
    </citation>
    <scope>NUCLEOTIDE SEQUENCE [LARGE SCALE GENOMIC DNA]</scope>
    <source>
        <strain>ATCC 27184 / PCC 6803 / Kazusa</strain>
    </source>
</reference>
<evidence type="ECO:0000255" key="1">
    <source>
        <dbReference type="HAMAP-Rule" id="MF_01218"/>
    </source>
</evidence>
<keyword id="KW-0021">Allosteric enzyme</keyword>
<keyword id="KW-0328">Glycosyltransferase</keyword>
<keyword id="KW-0342">GTP-binding</keyword>
<keyword id="KW-0460">Magnesium</keyword>
<keyword id="KW-0547">Nucleotide-binding</keyword>
<keyword id="KW-1185">Reference proteome</keyword>
<keyword id="KW-0808">Transferase</keyword>
<accession>P72753</accession>
<feature type="chain" id="PRO_0000120903" description="Uracil phosphoribosyltransferase">
    <location>
        <begin position="1"/>
        <end position="216"/>
    </location>
</feature>
<feature type="binding site" evidence="1">
    <location>
        <position position="84"/>
    </location>
    <ligand>
        <name>5-phospho-alpha-D-ribose 1-diphosphate</name>
        <dbReference type="ChEBI" id="CHEBI:58017"/>
    </ligand>
</feature>
<feature type="binding site" evidence="1">
    <location>
        <position position="109"/>
    </location>
    <ligand>
        <name>5-phospho-alpha-D-ribose 1-diphosphate</name>
        <dbReference type="ChEBI" id="CHEBI:58017"/>
    </ligand>
</feature>
<feature type="binding site" evidence="1">
    <location>
        <begin position="137"/>
        <end position="145"/>
    </location>
    <ligand>
        <name>5-phospho-alpha-D-ribose 1-diphosphate</name>
        <dbReference type="ChEBI" id="CHEBI:58017"/>
    </ligand>
</feature>
<feature type="binding site" evidence="1">
    <location>
        <position position="202"/>
    </location>
    <ligand>
        <name>uracil</name>
        <dbReference type="ChEBI" id="CHEBI:17568"/>
    </ligand>
</feature>
<feature type="binding site" evidence="1">
    <location>
        <begin position="207"/>
        <end position="209"/>
    </location>
    <ligand>
        <name>uracil</name>
        <dbReference type="ChEBI" id="CHEBI:17568"/>
    </ligand>
</feature>
<feature type="binding site" evidence="1">
    <location>
        <position position="208"/>
    </location>
    <ligand>
        <name>5-phospho-alpha-D-ribose 1-diphosphate</name>
        <dbReference type="ChEBI" id="CHEBI:58017"/>
    </ligand>
</feature>
<protein>
    <recommendedName>
        <fullName evidence="1">Uracil phosphoribosyltransferase</fullName>
        <ecNumber evidence="1">2.4.2.9</ecNumber>
    </recommendedName>
    <alternativeName>
        <fullName evidence="1">UMP pyrophosphorylase</fullName>
    </alternativeName>
    <alternativeName>
        <fullName evidence="1">UPRTase</fullName>
    </alternativeName>
</protein>
<proteinExistence type="inferred from homology"/>
<comment type="function">
    <text evidence="1">Catalyzes the conversion of uracil and 5-phospho-alpha-D-ribose 1-diphosphate (PRPP) to UMP and diphosphate.</text>
</comment>
<comment type="catalytic activity">
    <reaction evidence="1">
        <text>UMP + diphosphate = 5-phospho-alpha-D-ribose 1-diphosphate + uracil</text>
        <dbReference type="Rhea" id="RHEA:13017"/>
        <dbReference type="ChEBI" id="CHEBI:17568"/>
        <dbReference type="ChEBI" id="CHEBI:33019"/>
        <dbReference type="ChEBI" id="CHEBI:57865"/>
        <dbReference type="ChEBI" id="CHEBI:58017"/>
        <dbReference type="EC" id="2.4.2.9"/>
    </reaction>
</comment>
<comment type="cofactor">
    <cofactor evidence="1">
        <name>Mg(2+)</name>
        <dbReference type="ChEBI" id="CHEBI:18420"/>
    </cofactor>
    <text evidence="1">Binds 1 Mg(2+) ion per subunit. The magnesium is bound as Mg-PRPP.</text>
</comment>
<comment type="activity regulation">
    <text evidence="1">Allosterically activated by GTP.</text>
</comment>
<comment type="pathway">
    <text evidence="1">Pyrimidine metabolism; UMP biosynthesis via salvage pathway; UMP from uracil: step 1/1.</text>
</comment>
<comment type="similarity">
    <text evidence="1">Belongs to the UPRTase family.</text>
</comment>
<gene>
    <name evidence="1" type="primary">upp</name>
    <name type="ordered locus">sll1035</name>
</gene>